<proteinExistence type="inferred from homology"/>
<comment type="function">
    <text evidence="1">Reversibly transfers an adenylyl group from ATP to 4'-phosphopantetheine, yielding dephospho-CoA (dPCoA) and pyrophosphate.</text>
</comment>
<comment type="catalytic activity">
    <reaction evidence="1">
        <text>(R)-4'-phosphopantetheine + ATP + H(+) = 3'-dephospho-CoA + diphosphate</text>
        <dbReference type="Rhea" id="RHEA:19801"/>
        <dbReference type="ChEBI" id="CHEBI:15378"/>
        <dbReference type="ChEBI" id="CHEBI:30616"/>
        <dbReference type="ChEBI" id="CHEBI:33019"/>
        <dbReference type="ChEBI" id="CHEBI:57328"/>
        <dbReference type="ChEBI" id="CHEBI:61723"/>
        <dbReference type="EC" id="2.7.7.3"/>
    </reaction>
</comment>
<comment type="cofactor">
    <cofactor evidence="1">
        <name>Mg(2+)</name>
        <dbReference type="ChEBI" id="CHEBI:18420"/>
    </cofactor>
</comment>
<comment type="pathway">
    <text evidence="1">Cofactor biosynthesis; coenzyme A biosynthesis; CoA from (R)-pantothenate: step 4/5.</text>
</comment>
<comment type="subunit">
    <text evidence="1">Homohexamer.</text>
</comment>
<comment type="subcellular location">
    <subcellularLocation>
        <location evidence="1">Cytoplasm</location>
    </subcellularLocation>
</comment>
<comment type="similarity">
    <text evidence="1">Belongs to the bacterial CoaD family.</text>
</comment>
<name>COAD_PSET1</name>
<keyword id="KW-0067">ATP-binding</keyword>
<keyword id="KW-0173">Coenzyme A biosynthesis</keyword>
<keyword id="KW-0963">Cytoplasm</keyword>
<keyword id="KW-0460">Magnesium</keyword>
<keyword id="KW-0547">Nucleotide-binding</keyword>
<keyword id="KW-0548">Nucleotidyltransferase</keyword>
<keyword id="KW-1185">Reference proteome</keyword>
<keyword id="KW-0808">Transferase</keyword>
<reference key="1">
    <citation type="journal article" date="2005" name="Genome Res.">
        <title>Coping with cold: the genome of the versatile marine Antarctica bacterium Pseudoalteromonas haloplanktis TAC125.</title>
        <authorList>
            <person name="Medigue C."/>
            <person name="Krin E."/>
            <person name="Pascal G."/>
            <person name="Barbe V."/>
            <person name="Bernsel A."/>
            <person name="Bertin P.N."/>
            <person name="Cheung F."/>
            <person name="Cruveiller S."/>
            <person name="D'Amico S."/>
            <person name="Duilio A."/>
            <person name="Fang G."/>
            <person name="Feller G."/>
            <person name="Ho C."/>
            <person name="Mangenot S."/>
            <person name="Marino G."/>
            <person name="Nilsson J."/>
            <person name="Parrilli E."/>
            <person name="Rocha E.P.C."/>
            <person name="Rouy Z."/>
            <person name="Sekowska A."/>
            <person name="Tutino M.L."/>
            <person name="Vallenet D."/>
            <person name="von Heijne G."/>
            <person name="Danchin A."/>
        </authorList>
    </citation>
    <scope>NUCLEOTIDE SEQUENCE [LARGE SCALE GENOMIC DNA]</scope>
    <source>
        <strain>TAC 125</strain>
    </source>
</reference>
<feature type="chain" id="PRO_1000011208" description="Phosphopantetheine adenylyltransferase">
    <location>
        <begin position="1"/>
        <end position="164"/>
    </location>
</feature>
<feature type="binding site" evidence="1">
    <location>
        <begin position="10"/>
        <end position="11"/>
    </location>
    <ligand>
        <name>ATP</name>
        <dbReference type="ChEBI" id="CHEBI:30616"/>
    </ligand>
</feature>
<feature type="binding site" evidence="1">
    <location>
        <position position="10"/>
    </location>
    <ligand>
        <name>substrate</name>
    </ligand>
</feature>
<feature type="binding site" evidence="1">
    <location>
        <position position="18"/>
    </location>
    <ligand>
        <name>ATP</name>
        <dbReference type="ChEBI" id="CHEBI:30616"/>
    </ligand>
</feature>
<feature type="binding site" evidence="1">
    <location>
        <position position="42"/>
    </location>
    <ligand>
        <name>substrate</name>
    </ligand>
</feature>
<feature type="binding site" evidence="1">
    <location>
        <position position="74"/>
    </location>
    <ligand>
        <name>substrate</name>
    </ligand>
</feature>
<feature type="binding site" evidence="1">
    <location>
        <position position="88"/>
    </location>
    <ligand>
        <name>substrate</name>
    </ligand>
</feature>
<feature type="binding site" evidence="1">
    <location>
        <begin position="89"/>
        <end position="91"/>
    </location>
    <ligand>
        <name>ATP</name>
        <dbReference type="ChEBI" id="CHEBI:30616"/>
    </ligand>
</feature>
<feature type="binding site" evidence="1">
    <location>
        <position position="99"/>
    </location>
    <ligand>
        <name>ATP</name>
        <dbReference type="ChEBI" id="CHEBI:30616"/>
    </ligand>
</feature>
<feature type="binding site" evidence="1">
    <location>
        <begin position="124"/>
        <end position="130"/>
    </location>
    <ligand>
        <name>ATP</name>
        <dbReference type="ChEBI" id="CHEBI:30616"/>
    </ligand>
</feature>
<feature type="site" description="Transition state stabilizer" evidence="1">
    <location>
        <position position="18"/>
    </location>
</feature>
<dbReference type="EC" id="2.7.7.3" evidence="1"/>
<dbReference type="EMBL" id="CR954246">
    <property type="protein sequence ID" value="CAI87338.1"/>
    <property type="molecule type" value="Genomic_DNA"/>
</dbReference>
<dbReference type="SMR" id="Q3IHU4"/>
<dbReference type="STRING" id="326442.PSHAa2282"/>
<dbReference type="KEGG" id="pha:PSHAa2282"/>
<dbReference type="PATRIC" id="fig|326442.8.peg.2202"/>
<dbReference type="eggNOG" id="COG0669">
    <property type="taxonomic scope" value="Bacteria"/>
</dbReference>
<dbReference type="HOGENOM" id="CLU_100149_0_1_6"/>
<dbReference type="BioCyc" id="PHAL326442:PSHA_RS11255-MONOMER"/>
<dbReference type="UniPathway" id="UPA00241">
    <property type="reaction ID" value="UER00355"/>
</dbReference>
<dbReference type="Proteomes" id="UP000006843">
    <property type="component" value="Chromosome I"/>
</dbReference>
<dbReference type="GO" id="GO:0005737">
    <property type="term" value="C:cytoplasm"/>
    <property type="evidence" value="ECO:0007669"/>
    <property type="project" value="UniProtKB-SubCell"/>
</dbReference>
<dbReference type="GO" id="GO:0005524">
    <property type="term" value="F:ATP binding"/>
    <property type="evidence" value="ECO:0007669"/>
    <property type="project" value="UniProtKB-KW"/>
</dbReference>
<dbReference type="GO" id="GO:0004595">
    <property type="term" value="F:pantetheine-phosphate adenylyltransferase activity"/>
    <property type="evidence" value="ECO:0007669"/>
    <property type="project" value="UniProtKB-UniRule"/>
</dbReference>
<dbReference type="GO" id="GO:0015937">
    <property type="term" value="P:coenzyme A biosynthetic process"/>
    <property type="evidence" value="ECO:0007669"/>
    <property type="project" value="UniProtKB-UniRule"/>
</dbReference>
<dbReference type="CDD" id="cd02163">
    <property type="entry name" value="PPAT"/>
    <property type="match status" value="1"/>
</dbReference>
<dbReference type="Gene3D" id="3.40.50.620">
    <property type="entry name" value="HUPs"/>
    <property type="match status" value="1"/>
</dbReference>
<dbReference type="HAMAP" id="MF_00151">
    <property type="entry name" value="PPAT_bact"/>
    <property type="match status" value="1"/>
</dbReference>
<dbReference type="InterPro" id="IPR004821">
    <property type="entry name" value="Cyt_trans-like"/>
</dbReference>
<dbReference type="InterPro" id="IPR001980">
    <property type="entry name" value="PPAT"/>
</dbReference>
<dbReference type="InterPro" id="IPR014729">
    <property type="entry name" value="Rossmann-like_a/b/a_fold"/>
</dbReference>
<dbReference type="NCBIfam" id="TIGR01510">
    <property type="entry name" value="coaD_prev_kdtB"/>
    <property type="match status" value="1"/>
</dbReference>
<dbReference type="NCBIfam" id="TIGR00125">
    <property type="entry name" value="cyt_tran_rel"/>
    <property type="match status" value="1"/>
</dbReference>
<dbReference type="PANTHER" id="PTHR21342">
    <property type="entry name" value="PHOSPHOPANTETHEINE ADENYLYLTRANSFERASE"/>
    <property type="match status" value="1"/>
</dbReference>
<dbReference type="PANTHER" id="PTHR21342:SF1">
    <property type="entry name" value="PHOSPHOPANTETHEINE ADENYLYLTRANSFERASE"/>
    <property type="match status" value="1"/>
</dbReference>
<dbReference type="Pfam" id="PF01467">
    <property type="entry name" value="CTP_transf_like"/>
    <property type="match status" value="1"/>
</dbReference>
<dbReference type="PRINTS" id="PR01020">
    <property type="entry name" value="LPSBIOSNTHSS"/>
</dbReference>
<dbReference type="SUPFAM" id="SSF52374">
    <property type="entry name" value="Nucleotidylyl transferase"/>
    <property type="match status" value="1"/>
</dbReference>
<evidence type="ECO:0000255" key="1">
    <source>
        <dbReference type="HAMAP-Rule" id="MF_00151"/>
    </source>
</evidence>
<sequence length="164" mass="18163">MKITAIYPGTFDPLTNGHTDLIQRASKMFDTVIVAIAHNPSKQPCFSLDERVALANTLLTHIDNVKVIGFSGLLADLARDHNANVLIRGIRAVSDFDYEFQLANMNRRLNPDLESVFLTPSERNSFISSTLVKEVARHNGDVSEFVDPIVMAALNKKLGCSYSK</sequence>
<organism>
    <name type="scientific">Pseudoalteromonas translucida (strain TAC 125)</name>
    <dbReference type="NCBI Taxonomy" id="326442"/>
    <lineage>
        <taxon>Bacteria</taxon>
        <taxon>Pseudomonadati</taxon>
        <taxon>Pseudomonadota</taxon>
        <taxon>Gammaproteobacteria</taxon>
        <taxon>Alteromonadales</taxon>
        <taxon>Pseudoalteromonadaceae</taxon>
        <taxon>Pseudoalteromonas</taxon>
    </lineage>
</organism>
<accession>Q3IHU4</accession>
<protein>
    <recommendedName>
        <fullName evidence="1">Phosphopantetheine adenylyltransferase</fullName>
        <ecNumber evidence="1">2.7.7.3</ecNumber>
    </recommendedName>
    <alternativeName>
        <fullName evidence="1">Dephospho-CoA pyrophosphorylase</fullName>
    </alternativeName>
    <alternativeName>
        <fullName evidence="1">Pantetheine-phosphate adenylyltransferase</fullName>
        <shortName evidence="1">PPAT</shortName>
    </alternativeName>
</protein>
<gene>
    <name evidence="1" type="primary">coaD</name>
    <name type="ordered locus">PSHAa2282</name>
</gene>